<gene>
    <name type="primary">GTF3C4</name>
</gene>
<feature type="chain" id="PRO_0000209713" description="General transcription factor 3C polypeptide 4">
    <location>
        <begin position="1"/>
        <end position="822"/>
    </location>
</feature>
<feature type="region of interest" description="Disordered" evidence="1">
    <location>
        <begin position="1"/>
        <end position="41"/>
    </location>
</feature>
<feature type="region of interest" description="Disordered" evidence="1">
    <location>
        <begin position="608"/>
        <end position="663"/>
    </location>
</feature>
<feature type="modified residue" description="N-acetylmethionine" evidence="7">
    <location>
        <position position="1"/>
    </location>
</feature>
<feature type="modified residue" description="Phosphoserine" evidence="11">
    <location>
        <position position="19"/>
    </location>
</feature>
<feature type="modified residue" description="Phosphoserine" evidence="11">
    <location>
        <position position="604"/>
    </location>
</feature>
<feature type="modified residue" description="Phosphoserine" evidence="5 6 8 9 10 11">
    <location>
        <position position="611"/>
    </location>
</feature>
<feature type="modified residue" description="Phosphoserine" evidence="11">
    <location>
        <position position="652"/>
    </location>
</feature>
<feature type="cross-link" description="Glycyl lysine isopeptide (Lys-Gly) (interchain with G-Cter in SUMO2)" evidence="12">
    <location>
        <position position="225"/>
    </location>
</feature>
<feature type="cross-link" description="Glycyl lysine isopeptide (Lys-Gly) (interchain with G-Cter in SUMO2)" evidence="12">
    <location>
        <position position="629"/>
    </location>
</feature>
<feature type="sequence conflict" description="In Ref. 1; AAF05087." evidence="4" ref="1">
    <original>C</original>
    <variation>S</variation>
    <location>
        <position position="268"/>
    </location>
</feature>
<feature type="sequence conflict" description="In Ref. 1; AAF05087." evidence="4" ref="1">
    <original>C</original>
    <variation>R</variation>
    <location>
        <position position="402"/>
    </location>
</feature>
<feature type="sequence conflict" description="In Ref. 1; AAF05087." evidence="4" ref="1">
    <original>V</original>
    <variation>L</variation>
    <location>
        <position position="413"/>
    </location>
</feature>
<feature type="sequence conflict" description="In Ref. 1; AAF05087." evidence="4" ref="1">
    <original>L</original>
    <variation>V</variation>
    <location>
        <position position="450"/>
    </location>
</feature>
<feature type="sequence conflict" description="In Ref. 1; AAF05087." evidence="4" ref="1">
    <original>S</original>
    <variation>K</variation>
    <location>
        <position position="483"/>
    </location>
</feature>
<feature type="sequence conflict" description="In Ref. 1; AAF05087." evidence="4" ref="1">
    <original>R</original>
    <variation>P</variation>
    <location>
        <position position="690"/>
    </location>
</feature>
<feature type="strand" evidence="13">
    <location>
        <begin position="53"/>
        <end position="59"/>
    </location>
</feature>
<feature type="strand" evidence="13">
    <location>
        <begin position="66"/>
        <end position="68"/>
    </location>
</feature>
<feature type="strand" evidence="13">
    <location>
        <begin position="70"/>
        <end position="72"/>
    </location>
</feature>
<feature type="strand" evidence="13">
    <location>
        <begin position="76"/>
        <end position="82"/>
    </location>
</feature>
<feature type="strand" evidence="13">
    <location>
        <begin position="85"/>
        <end position="92"/>
    </location>
</feature>
<feature type="strand" evidence="13">
    <location>
        <begin position="103"/>
        <end position="110"/>
    </location>
</feature>
<feature type="helix" evidence="13">
    <location>
        <begin position="123"/>
        <end position="134"/>
    </location>
</feature>
<feature type="helix" evidence="13">
    <location>
        <begin position="139"/>
        <end position="147"/>
    </location>
</feature>
<feature type="turn" evidence="13">
    <location>
        <begin position="149"/>
        <end position="151"/>
    </location>
</feature>
<feature type="strand" evidence="13">
    <location>
        <begin position="156"/>
        <end position="158"/>
    </location>
</feature>
<feature type="strand" evidence="13">
    <location>
        <begin position="163"/>
        <end position="169"/>
    </location>
</feature>
<feature type="strand" evidence="13">
    <location>
        <begin position="175"/>
        <end position="179"/>
    </location>
</feature>
<feature type="strand" evidence="13">
    <location>
        <begin position="182"/>
        <end position="186"/>
    </location>
</feature>
<feature type="strand" evidence="13">
    <location>
        <begin position="191"/>
        <end position="195"/>
    </location>
</feature>
<feature type="strand" evidence="13">
    <location>
        <begin position="197"/>
        <end position="200"/>
    </location>
</feature>
<feature type="strand" evidence="13">
    <location>
        <begin position="203"/>
        <end position="207"/>
    </location>
</feature>
<feature type="helix" evidence="13">
    <location>
        <begin position="208"/>
        <end position="218"/>
    </location>
</feature>
<feature type="turn" evidence="13">
    <location>
        <begin position="219"/>
        <end position="221"/>
    </location>
</feature>
<feature type="turn" evidence="13">
    <location>
        <begin position="225"/>
        <end position="227"/>
    </location>
</feature>
<feature type="helix" evidence="13">
    <location>
        <begin position="236"/>
        <end position="244"/>
    </location>
</feature>
<feature type="strand" evidence="13">
    <location>
        <begin position="248"/>
        <end position="257"/>
    </location>
</feature>
<feature type="strand" evidence="13">
    <location>
        <begin position="273"/>
        <end position="280"/>
    </location>
</feature>
<feature type="strand" evidence="13">
    <location>
        <begin position="283"/>
        <end position="293"/>
    </location>
</feature>
<feature type="helix" evidence="13">
    <location>
        <begin position="297"/>
        <end position="299"/>
    </location>
</feature>
<feature type="strand" evidence="13">
    <location>
        <begin position="300"/>
        <end position="307"/>
    </location>
</feature>
<feature type="strand" evidence="13">
    <location>
        <begin position="311"/>
        <end position="323"/>
    </location>
</feature>
<feature type="strand" evidence="13">
    <location>
        <begin position="326"/>
        <end position="335"/>
    </location>
</feature>
<feature type="strand" evidence="13">
    <location>
        <begin position="340"/>
        <end position="343"/>
    </location>
</feature>
<feature type="strand" evidence="13">
    <location>
        <begin position="360"/>
        <end position="363"/>
    </location>
</feature>
<feature type="strand" evidence="13">
    <location>
        <begin position="371"/>
        <end position="381"/>
    </location>
</feature>
<feature type="turn" evidence="13">
    <location>
        <begin position="382"/>
        <end position="385"/>
    </location>
</feature>
<feature type="strand" evidence="13">
    <location>
        <begin position="386"/>
        <end position="395"/>
    </location>
</feature>
<feature type="strand" evidence="13">
    <location>
        <begin position="398"/>
        <end position="407"/>
    </location>
</feature>
<feature type="strand" evidence="13">
    <location>
        <begin position="410"/>
        <end position="418"/>
    </location>
</feature>
<feature type="strand" evidence="13">
    <location>
        <begin position="428"/>
        <end position="431"/>
    </location>
</feature>
<feature type="turn" evidence="13">
    <location>
        <begin position="433"/>
        <end position="435"/>
    </location>
</feature>
<feature type="strand" evidence="13">
    <location>
        <begin position="438"/>
        <end position="441"/>
    </location>
</feature>
<feature type="strand" evidence="13">
    <location>
        <begin position="447"/>
        <end position="454"/>
    </location>
</feature>
<feature type="strand" evidence="13">
    <location>
        <begin position="456"/>
        <end position="466"/>
    </location>
</feature>
<feature type="helix" evidence="13">
    <location>
        <begin position="468"/>
        <end position="472"/>
    </location>
</feature>
<feature type="strand" evidence="13">
    <location>
        <begin position="474"/>
        <end position="482"/>
    </location>
</feature>
<feature type="strand" evidence="13">
    <location>
        <begin position="488"/>
        <end position="495"/>
    </location>
</feature>
<feature type="strand" evidence="13">
    <location>
        <begin position="509"/>
        <end position="514"/>
    </location>
</feature>
<feature type="helix" evidence="13">
    <location>
        <begin position="518"/>
        <end position="526"/>
    </location>
</feature>
<feature type="helix" evidence="13">
    <location>
        <begin position="533"/>
        <end position="536"/>
    </location>
</feature>
<feature type="helix" evidence="13">
    <location>
        <begin position="537"/>
        <end position="550"/>
    </location>
</feature>
<feature type="helix" evidence="13">
    <location>
        <begin position="555"/>
        <end position="567"/>
    </location>
</feature>
<feature type="helix" evidence="13">
    <location>
        <begin position="571"/>
        <end position="587"/>
    </location>
</feature>
<feature type="helix" evidence="13">
    <location>
        <begin position="664"/>
        <end position="695"/>
    </location>
</feature>
<feature type="helix" evidence="13">
    <location>
        <begin position="709"/>
        <end position="715"/>
    </location>
</feature>
<feature type="strand" evidence="14">
    <location>
        <begin position="720"/>
        <end position="722"/>
    </location>
</feature>
<feature type="helix" evidence="13">
    <location>
        <begin position="725"/>
        <end position="737"/>
    </location>
</feature>
<feature type="turn" evidence="13">
    <location>
        <begin position="748"/>
        <end position="750"/>
    </location>
</feature>
<feature type="strand" evidence="13">
    <location>
        <begin position="758"/>
        <end position="763"/>
    </location>
</feature>
<feature type="strand" evidence="13">
    <location>
        <begin position="769"/>
        <end position="772"/>
    </location>
</feature>
<feature type="turn" evidence="13">
    <location>
        <begin position="774"/>
        <end position="776"/>
    </location>
</feature>
<feature type="strand" evidence="13">
    <location>
        <begin position="782"/>
        <end position="784"/>
    </location>
</feature>
<feature type="helix" evidence="13">
    <location>
        <begin position="804"/>
        <end position="809"/>
    </location>
</feature>
<feature type="turn" evidence="13">
    <location>
        <begin position="815"/>
        <end position="817"/>
    </location>
</feature>
<sequence length="822" mass="91982">MNTADQARVGPADDGPAPSGEEEGEGGGEAGGKEPAADAAPGPSAAFRLMVTRREPAVKLQYAVSGLEPLAWSEDHRVSVSTARSIAVLELICDVHNPGQDLVIHRTSVPAPLNSCLLKVGSKTEVAECKEKFAASKDPTVSQTFMLDRVFNPEGKALPPMRGFKYTSWSPMGCDANGRCLLAALTMDNRLTIQANLNRLQWVQLVDLTEIYGERLYETSYRLSKNEAPEGNLGDFAEFQRRHSMQTPVRMEWSGICTTQQVKHNNECRDVGSVLLAVLFENGNIAVWQFQLPFVGKESISSCNTIESGITSPSVLFWWEYEHNNRKMSGLIVGSAFGPIKILPVNLKAVKGYFTLRQPVILWKEMDQLPVHSIKCVPLYHPYQKCSCSLVVAARGSYVFWCLLLISKAGLNVHNSHVTGLHSLPIVSMTADKQNGTVYTCSSDGKVRQLIPIFTDVALKFEHQLIKLSDVFGSVRTHGIAVSPCGAYLAIITTEGMINGLHPVNKNYQVQFVTLKTFEEAAAQLLESSVQNLFKQVDLIDLVRWKILKDKHIPQFLQEALEKKIESSGVTYFWRFKLFLLRILYQSMQKTPSEALWKPTHEDSKILLVDSPGMGNADDEQQEEGTSSKQVVKQGLQERSKEGDVEEPTDDSLPTTGDAGGREPMEEKLLEIQGKIEAVEMHLTREHMKRVLGEVYLHTWITENTSIPTRGLCNFLMSDEEYDDRTARVLIGHISKKMNKQTFPEHCSLCKEILPFTDRKQAVCSNGHIWLRCFLTYQSCQSLIYRRCLLHDSIARHPAPEDPDWIKRLLQSPCPFCDSPVF</sequence>
<name>TF3C4_HUMAN</name>
<organism>
    <name type="scientific">Homo sapiens</name>
    <name type="common">Human</name>
    <dbReference type="NCBI Taxonomy" id="9606"/>
    <lineage>
        <taxon>Eukaryota</taxon>
        <taxon>Metazoa</taxon>
        <taxon>Chordata</taxon>
        <taxon>Craniata</taxon>
        <taxon>Vertebrata</taxon>
        <taxon>Euteleostomi</taxon>
        <taxon>Mammalia</taxon>
        <taxon>Eutheria</taxon>
        <taxon>Euarchontoglires</taxon>
        <taxon>Primates</taxon>
        <taxon>Haplorrhini</taxon>
        <taxon>Catarrhini</taxon>
        <taxon>Hominidae</taxon>
        <taxon>Homo</taxon>
    </lineage>
</organism>
<reference key="1">
    <citation type="journal article" date="1999" name="Mol. Cell. Biol.">
        <title>The TFIIIC90 subunit of TFIIIC interacts with multiple components of the RNA polymerase III machinery and contains a histone-specific acetyltransferase activity.</title>
        <authorList>
            <person name="Hsieh Y.-J."/>
            <person name="Kundu T.K."/>
            <person name="Wang Z."/>
            <person name="Kovelman R."/>
            <person name="Roeder R.G."/>
        </authorList>
    </citation>
    <scope>NUCLEOTIDE SEQUENCE [MRNA]</scope>
    <scope>PROTEIN SEQUENCE OF 139-156; 170-179; 614-626 AND 643-659</scope>
    <scope>FUNCTION</scope>
    <scope>CATALYTIC ACTIVITY</scope>
    <scope>INTERACTION WITH GTF3C1; GTF3C2; GTF3C5; BRF1; POLR3C AND POLR3F</scope>
</reference>
<reference key="2">
    <citation type="journal article" date="2004" name="Nature">
        <title>DNA sequence and analysis of human chromosome 9.</title>
        <authorList>
            <person name="Humphray S.J."/>
            <person name="Oliver K."/>
            <person name="Hunt A.R."/>
            <person name="Plumb R.W."/>
            <person name="Loveland J.E."/>
            <person name="Howe K.L."/>
            <person name="Andrews T.D."/>
            <person name="Searle S."/>
            <person name="Hunt S.E."/>
            <person name="Scott C.E."/>
            <person name="Jones M.C."/>
            <person name="Ainscough R."/>
            <person name="Almeida J.P."/>
            <person name="Ambrose K.D."/>
            <person name="Ashwell R.I.S."/>
            <person name="Babbage A.K."/>
            <person name="Babbage S."/>
            <person name="Bagguley C.L."/>
            <person name="Bailey J."/>
            <person name="Banerjee R."/>
            <person name="Barker D.J."/>
            <person name="Barlow K.F."/>
            <person name="Bates K."/>
            <person name="Beasley H."/>
            <person name="Beasley O."/>
            <person name="Bird C.P."/>
            <person name="Bray-Allen S."/>
            <person name="Brown A.J."/>
            <person name="Brown J.Y."/>
            <person name="Burford D."/>
            <person name="Burrill W."/>
            <person name="Burton J."/>
            <person name="Carder C."/>
            <person name="Carter N.P."/>
            <person name="Chapman J.C."/>
            <person name="Chen Y."/>
            <person name="Clarke G."/>
            <person name="Clark S.Y."/>
            <person name="Clee C.M."/>
            <person name="Clegg S."/>
            <person name="Collier R.E."/>
            <person name="Corby N."/>
            <person name="Crosier M."/>
            <person name="Cummings A.T."/>
            <person name="Davies J."/>
            <person name="Dhami P."/>
            <person name="Dunn M."/>
            <person name="Dutta I."/>
            <person name="Dyer L.W."/>
            <person name="Earthrowl M.E."/>
            <person name="Faulkner L."/>
            <person name="Fleming C.J."/>
            <person name="Frankish A."/>
            <person name="Frankland J.A."/>
            <person name="French L."/>
            <person name="Fricker D.G."/>
            <person name="Garner P."/>
            <person name="Garnett J."/>
            <person name="Ghori J."/>
            <person name="Gilbert J.G.R."/>
            <person name="Glison C."/>
            <person name="Grafham D.V."/>
            <person name="Gribble S."/>
            <person name="Griffiths C."/>
            <person name="Griffiths-Jones S."/>
            <person name="Grocock R."/>
            <person name="Guy J."/>
            <person name="Hall R.E."/>
            <person name="Hammond S."/>
            <person name="Harley J.L."/>
            <person name="Harrison E.S.I."/>
            <person name="Hart E.A."/>
            <person name="Heath P.D."/>
            <person name="Henderson C.D."/>
            <person name="Hopkins B.L."/>
            <person name="Howard P.J."/>
            <person name="Howden P.J."/>
            <person name="Huckle E."/>
            <person name="Johnson C."/>
            <person name="Johnson D."/>
            <person name="Joy A.A."/>
            <person name="Kay M."/>
            <person name="Keenan S."/>
            <person name="Kershaw J.K."/>
            <person name="Kimberley A.M."/>
            <person name="King A."/>
            <person name="Knights A."/>
            <person name="Laird G.K."/>
            <person name="Langford C."/>
            <person name="Lawlor S."/>
            <person name="Leongamornlert D.A."/>
            <person name="Leversha M."/>
            <person name="Lloyd C."/>
            <person name="Lloyd D.M."/>
            <person name="Lovell J."/>
            <person name="Martin S."/>
            <person name="Mashreghi-Mohammadi M."/>
            <person name="Matthews L."/>
            <person name="McLaren S."/>
            <person name="McLay K.E."/>
            <person name="McMurray A."/>
            <person name="Milne S."/>
            <person name="Nickerson T."/>
            <person name="Nisbett J."/>
            <person name="Nordsiek G."/>
            <person name="Pearce A.V."/>
            <person name="Peck A.I."/>
            <person name="Porter K.M."/>
            <person name="Pandian R."/>
            <person name="Pelan S."/>
            <person name="Phillimore B."/>
            <person name="Povey S."/>
            <person name="Ramsey Y."/>
            <person name="Rand V."/>
            <person name="Scharfe M."/>
            <person name="Sehra H.K."/>
            <person name="Shownkeen R."/>
            <person name="Sims S.K."/>
            <person name="Skuce C.D."/>
            <person name="Smith M."/>
            <person name="Steward C.A."/>
            <person name="Swarbreck D."/>
            <person name="Sycamore N."/>
            <person name="Tester J."/>
            <person name="Thorpe A."/>
            <person name="Tracey A."/>
            <person name="Tromans A."/>
            <person name="Thomas D.W."/>
            <person name="Wall M."/>
            <person name="Wallis J.M."/>
            <person name="West A.P."/>
            <person name="Whitehead S.L."/>
            <person name="Willey D.L."/>
            <person name="Williams S.A."/>
            <person name="Wilming L."/>
            <person name="Wray P.W."/>
            <person name="Young L."/>
            <person name="Ashurst J.L."/>
            <person name="Coulson A."/>
            <person name="Blocker H."/>
            <person name="Durbin R.M."/>
            <person name="Sulston J.E."/>
            <person name="Hubbard T."/>
            <person name="Jackson M.J."/>
            <person name="Bentley D.R."/>
            <person name="Beck S."/>
            <person name="Rogers J."/>
            <person name="Dunham I."/>
        </authorList>
    </citation>
    <scope>NUCLEOTIDE SEQUENCE [LARGE SCALE GENOMIC DNA]</scope>
</reference>
<reference key="3">
    <citation type="submission" date="2005-07" db="EMBL/GenBank/DDBJ databases">
        <authorList>
            <person name="Mural R.J."/>
            <person name="Istrail S."/>
            <person name="Sutton G.G."/>
            <person name="Florea L."/>
            <person name="Halpern A.L."/>
            <person name="Mobarry C.M."/>
            <person name="Lippert R."/>
            <person name="Walenz B."/>
            <person name="Shatkay H."/>
            <person name="Dew I."/>
            <person name="Miller J.R."/>
            <person name="Flanigan M.J."/>
            <person name="Edwards N.J."/>
            <person name="Bolanos R."/>
            <person name="Fasulo D."/>
            <person name="Halldorsson B.V."/>
            <person name="Hannenhalli S."/>
            <person name="Turner R."/>
            <person name="Yooseph S."/>
            <person name="Lu F."/>
            <person name="Nusskern D.R."/>
            <person name="Shue B.C."/>
            <person name="Zheng X.H."/>
            <person name="Zhong F."/>
            <person name="Delcher A.L."/>
            <person name="Huson D.H."/>
            <person name="Kravitz S.A."/>
            <person name="Mouchard L."/>
            <person name="Reinert K."/>
            <person name="Remington K.A."/>
            <person name="Clark A.G."/>
            <person name="Waterman M.S."/>
            <person name="Eichler E.E."/>
            <person name="Adams M.D."/>
            <person name="Hunkapiller M.W."/>
            <person name="Myers E.W."/>
            <person name="Venter J.C."/>
        </authorList>
    </citation>
    <scope>NUCLEOTIDE SEQUENCE [LARGE SCALE GENOMIC DNA]</scope>
</reference>
<reference key="4">
    <citation type="journal article" date="2004" name="Genome Res.">
        <title>The status, quality, and expansion of the NIH full-length cDNA project: the Mammalian Gene Collection (MGC).</title>
        <authorList>
            <consortium name="The MGC Project Team"/>
        </authorList>
    </citation>
    <scope>NUCLEOTIDE SEQUENCE [LARGE SCALE MRNA]</scope>
    <source>
        <tissue>Brain</tissue>
        <tissue>Placenta</tissue>
        <tissue>Testis</tissue>
    </source>
</reference>
<reference key="5">
    <citation type="journal article" date="2007" name="J. Biol. Chem.">
        <title>Identification, molecular cloning, and characterization of the sixth subunit of human transcription factor TFIIIC.</title>
        <authorList>
            <person name="Dumay-Odelot H."/>
            <person name="Marck C."/>
            <person name="Durrieu-Gaillard S."/>
            <person name="Lefebvre O."/>
            <person name="Jourdain S."/>
            <person name="Prochazkova M."/>
            <person name="Pflieger A."/>
            <person name="Teichmann M."/>
        </authorList>
    </citation>
    <scope>IDENTIFICATION IN TFIIIC COMPLEX</scope>
    <scope>INTERACTION WITH GTF3C6</scope>
</reference>
<reference key="6">
    <citation type="journal article" date="2008" name="Mol. Cell">
        <title>Kinase-selective enrichment enables quantitative phosphoproteomics of the kinome across the cell cycle.</title>
        <authorList>
            <person name="Daub H."/>
            <person name="Olsen J.V."/>
            <person name="Bairlein M."/>
            <person name="Gnad F."/>
            <person name="Oppermann F.S."/>
            <person name="Korner R."/>
            <person name="Greff Z."/>
            <person name="Keri G."/>
            <person name="Stemmann O."/>
            <person name="Mann M."/>
        </authorList>
    </citation>
    <scope>PHOSPHORYLATION [LARGE SCALE ANALYSIS] AT SER-611</scope>
    <scope>IDENTIFICATION BY MASS SPECTROMETRY [LARGE SCALE ANALYSIS]</scope>
    <source>
        <tissue>Cervix carcinoma</tissue>
    </source>
</reference>
<reference key="7">
    <citation type="journal article" date="2008" name="Proc. Natl. Acad. Sci. U.S.A.">
        <title>A quantitative atlas of mitotic phosphorylation.</title>
        <authorList>
            <person name="Dephoure N."/>
            <person name="Zhou C."/>
            <person name="Villen J."/>
            <person name="Beausoleil S.A."/>
            <person name="Bakalarski C.E."/>
            <person name="Elledge S.J."/>
            <person name="Gygi S.P."/>
        </authorList>
    </citation>
    <scope>PHOSPHORYLATION [LARGE SCALE ANALYSIS] AT SER-611</scope>
    <scope>IDENTIFICATION BY MASS SPECTROMETRY [LARGE SCALE ANALYSIS]</scope>
    <source>
        <tissue>Cervix carcinoma</tissue>
    </source>
</reference>
<reference key="8">
    <citation type="journal article" date="2009" name="Anal. Chem.">
        <title>Lys-N and trypsin cover complementary parts of the phosphoproteome in a refined SCX-based approach.</title>
        <authorList>
            <person name="Gauci S."/>
            <person name="Helbig A.O."/>
            <person name="Slijper M."/>
            <person name="Krijgsveld J."/>
            <person name="Heck A.J."/>
            <person name="Mohammed S."/>
        </authorList>
    </citation>
    <scope>ACETYLATION [LARGE SCALE ANALYSIS] AT MET-1</scope>
    <scope>IDENTIFICATION BY MASS SPECTROMETRY [LARGE SCALE ANALYSIS]</scope>
</reference>
<reference key="9">
    <citation type="journal article" date="2009" name="Sci. Signal.">
        <title>Quantitative phosphoproteomic analysis of T cell receptor signaling reveals system-wide modulation of protein-protein interactions.</title>
        <authorList>
            <person name="Mayya V."/>
            <person name="Lundgren D.H."/>
            <person name="Hwang S.-I."/>
            <person name="Rezaul K."/>
            <person name="Wu L."/>
            <person name="Eng J.K."/>
            <person name="Rodionov V."/>
            <person name="Han D.K."/>
        </authorList>
    </citation>
    <scope>PHOSPHORYLATION [LARGE SCALE ANALYSIS] AT SER-611</scope>
    <scope>IDENTIFICATION BY MASS SPECTROMETRY [LARGE SCALE ANALYSIS]</scope>
    <source>
        <tissue>Leukemic T-cell</tissue>
    </source>
</reference>
<reference key="10">
    <citation type="journal article" date="2010" name="Sci. Signal.">
        <title>Quantitative phosphoproteomics reveals widespread full phosphorylation site occupancy during mitosis.</title>
        <authorList>
            <person name="Olsen J.V."/>
            <person name="Vermeulen M."/>
            <person name="Santamaria A."/>
            <person name="Kumar C."/>
            <person name="Miller M.L."/>
            <person name="Jensen L.J."/>
            <person name="Gnad F."/>
            <person name="Cox J."/>
            <person name="Jensen T.S."/>
            <person name="Nigg E.A."/>
            <person name="Brunak S."/>
            <person name="Mann M."/>
        </authorList>
    </citation>
    <scope>PHOSPHORYLATION [LARGE SCALE ANALYSIS] AT SER-611</scope>
    <scope>IDENTIFICATION BY MASS SPECTROMETRY [LARGE SCALE ANALYSIS]</scope>
    <source>
        <tissue>Cervix carcinoma</tissue>
    </source>
</reference>
<reference key="11">
    <citation type="journal article" date="2011" name="BMC Syst. Biol.">
        <title>Initial characterization of the human central proteome.</title>
        <authorList>
            <person name="Burkard T.R."/>
            <person name="Planyavsky M."/>
            <person name="Kaupe I."/>
            <person name="Breitwieser F.P."/>
            <person name="Buerckstuemmer T."/>
            <person name="Bennett K.L."/>
            <person name="Superti-Furga G."/>
            <person name="Colinge J."/>
        </authorList>
    </citation>
    <scope>IDENTIFICATION BY MASS SPECTROMETRY [LARGE SCALE ANALYSIS]</scope>
</reference>
<reference key="12">
    <citation type="journal article" date="2011" name="Sci. Signal.">
        <title>System-wide temporal characterization of the proteome and phosphoproteome of human embryonic stem cell differentiation.</title>
        <authorList>
            <person name="Rigbolt K.T."/>
            <person name="Prokhorova T.A."/>
            <person name="Akimov V."/>
            <person name="Henningsen J."/>
            <person name="Johansen P.T."/>
            <person name="Kratchmarova I."/>
            <person name="Kassem M."/>
            <person name="Mann M."/>
            <person name="Olsen J.V."/>
            <person name="Blagoev B."/>
        </authorList>
    </citation>
    <scope>PHOSPHORYLATION [LARGE SCALE ANALYSIS] AT SER-611</scope>
    <scope>IDENTIFICATION BY MASS SPECTROMETRY [LARGE SCALE ANALYSIS]</scope>
</reference>
<reference key="13">
    <citation type="journal article" date="2013" name="J. Proteome Res.">
        <title>Toward a comprehensive characterization of a human cancer cell phosphoproteome.</title>
        <authorList>
            <person name="Zhou H."/>
            <person name="Di Palma S."/>
            <person name="Preisinger C."/>
            <person name="Peng M."/>
            <person name="Polat A.N."/>
            <person name="Heck A.J."/>
            <person name="Mohammed S."/>
        </authorList>
    </citation>
    <scope>PHOSPHORYLATION [LARGE SCALE ANALYSIS] AT SER-19; SER-604; SER-611 AND SER-652</scope>
    <scope>IDENTIFICATION BY MASS SPECTROMETRY [LARGE SCALE ANALYSIS]</scope>
    <source>
        <tissue>Cervix carcinoma</tissue>
        <tissue>Erythroleukemia</tissue>
    </source>
</reference>
<reference key="14">
    <citation type="journal article" date="2017" name="Nat. Struct. Mol. Biol.">
        <title>Site-specific mapping of the human SUMO proteome reveals co-modification with phosphorylation.</title>
        <authorList>
            <person name="Hendriks I.A."/>
            <person name="Lyon D."/>
            <person name="Young C."/>
            <person name="Jensen L.J."/>
            <person name="Vertegaal A.C."/>
            <person name="Nielsen M.L."/>
        </authorList>
    </citation>
    <scope>SUMOYLATION [LARGE SCALE ANALYSIS] AT LYS-225 AND LYS-629</scope>
    <scope>IDENTIFICATION BY MASS SPECTROMETRY [LARGE SCALE ANALYSIS]</scope>
</reference>
<proteinExistence type="evidence at protein level"/>
<accession>Q9UKN8</accession>
<accession>Q5VZJ7</accession>
<keyword id="KW-0002">3D-structure</keyword>
<keyword id="KW-0007">Acetylation</keyword>
<keyword id="KW-0012">Acyltransferase</keyword>
<keyword id="KW-0903">Direct protein sequencing</keyword>
<keyword id="KW-0238">DNA-binding</keyword>
<keyword id="KW-1017">Isopeptide bond</keyword>
<keyword id="KW-0539">Nucleus</keyword>
<keyword id="KW-0597">Phosphoprotein</keyword>
<keyword id="KW-1267">Proteomics identification</keyword>
<keyword id="KW-1185">Reference proteome</keyword>
<keyword id="KW-0804">Transcription</keyword>
<keyword id="KW-0808">Transferase</keyword>
<keyword id="KW-0832">Ubl conjugation</keyword>
<dbReference type="EC" id="2.3.1.48" evidence="2"/>
<dbReference type="EMBL" id="AF142328">
    <property type="protein sequence ID" value="AAF05087.1"/>
    <property type="molecule type" value="mRNA"/>
</dbReference>
<dbReference type="EMBL" id="AL160165">
    <property type="status" value="NOT_ANNOTATED_CDS"/>
    <property type="molecule type" value="Genomic_DNA"/>
</dbReference>
<dbReference type="EMBL" id="CH471090">
    <property type="protein sequence ID" value="EAW88011.1"/>
    <property type="molecule type" value="Genomic_DNA"/>
</dbReference>
<dbReference type="EMBL" id="BC011619">
    <property type="protein sequence ID" value="AAH11619.1"/>
    <property type="status" value="ALT_SEQ"/>
    <property type="molecule type" value="mRNA"/>
</dbReference>
<dbReference type="EMBL" id="BC094774">
    <property type="protein sequence ID" value="AAH94774.1"/>
    <property type="molecule type" value="mRNA"/>
</dbReference>
<dbReference type="EMBL" id="BC104755">
    <property type="protein sequence ID" value="AAI04756.1"/>
    <property type="molecule type" value="mRNA"/>
</dbReference>
<dbReference type="EMBL" id="BC112245">
    <property type="protein sequence ID" value="AAI12246.1"/>
    <property type="molecule type" value="mRNA"/>
</dbReference>
<dbReference type="CCDS" id="CCDS6953.1"/>
<dbReference type="RefSeq" id="NP_036336.2">
    <property type="nucleotide sequence ID" value="NM_012204.4"/>
</dbReference>
<dbReference type="PDB" id="8CLI">
    <property type="method" value="EM"/>
    <property type="resolution" value="3.20 A"/>
    <property type="chains" value="B=1-822"/>
</dbReference>
<dbReference type="PDB" id="8CLJ">
    <property type="method" value="EM"/>
    <property type="resolution" value="3.20 A"/>
    <property type="chains" value="B/G=1-822"/>
</dbReference>
<dbReference type="PDB" id="8CLL">
    <property type="method" value="EM"/>
    <property type="resolution" value="3.40 A"/>
    <property type="chains" value="B/G=1-822"/>
</dbReference>
<dbReference type="PDBsum" id="8CLI"/>
<dbReference type="PDBsum" id="8CLJ"/>
<dbReference type="PDBsum" id="8CLL"/>
<dbReference type="EMDB" id="EMD-16713"/>
<dbReference type="EMDB" id="EMD-16714"/>
<dbReference type="EMDB" id="EMD-16717"/>
<dbReference type="SMR" id="Q9UKN8"/>
<dbReference type="BioGRID" id="114738">
    <property type="interactions" value="204"/>
</dbReference>
<dbReference type="ComplexPortal" id="CPX-2373">
    <property type="entry name" value="General transcription factor TFIIIC complex"/>
</dbReference>
<dbReference type="CORUM" id="Q9UKN8"/>
<dbReference type="FunCoup" id="Q9UKN8">
    <property type="interactions" value="3404"/>
</dbReference>
<dbReference type="IntAct" id="Q9UKN8">
    <property type="interactions" value="76"/>
</dbReference>
<dbReference type="MINT" id="Q9UKN8"/>
<dbReference type="STRING" id="9606.ENSP00000361219"/>
<dbReference type="GlyGen" id="Q9UKN8">
    <property type="glycosylation" value="1 site, 1 O-linked glycan (1 site)"/>
</dbReference>
<dbReference type="iPTMnet" id="Q9UKN8"/>
<dbReference type="MetOSite" id="Q9UKN8"/>
<dbReference type="PhosphoSitePlus" id="Q9UKN8"/>
<dbReference type="SwissPalm" id="Q9UKN8"/>
<dbReference type="BioMuta" id="GTF3C4"/>
<dbReference type="DMDM" id="212276467"/>
<dbReference type="jPOST" id="Q9UKN8"/>
<dbReference type="MassIVE" id="Q9UKN8"/>
<dbReference type="PaxDb" id="9606-ENSP00000361219"/>
<dbReference type="PeptideAtlas" id="Q9UKN8"/>
<dbReference type="ProteomicsDB" id="84826"/>
<dbReference type="Pumba" id="Q9UKN8"/>
<dbReference type="Antibodypedia" id="31705">
    <property type="antibodies" value="214 antibodies from 27 providers"/>
</dbReference>
<dbReference type="DNASU" id="9329"/>
<dbReference type="Ensembl" id="ENST00000372146.5">
    <property type="protein sequence ID" value="ENSP00000361219.4"/>
    <property type="gene ID" value="ENSG00000125484.12"/>
</dbReference>
<dbReference type="GeneID" id="9329"/>
<dbReference type="KEGG" id="hsa:9329"/>
<dbReference type="MANE-Select" id="ENST00000372146.5">
    <property type="protein sequence ID" value="ENSP00000361219.4"/>
    <property type="RefSeq nucleotide sequence ID" value="NM_012204.4"/>
    <property type="RefSeq protein sequence ID" value="NP_036336.2"/>
</dbReference>
<dbReference type="UCSC" id="uc010mzv.4">
    <property type="organism name" value="human"/>
</dbReference>
<dbReference type="AGR" id="HGNC:4667"/>
<dbReference type="CTD" id="9329"/>
<dbReference type="DisGeNET" id="9329"/>
<dbReference type="GeneCards" id="GTF3C4"/>
<dbReference type="HGNC" id="HGNC:4667">
    <property type="gene designation" value="GTF3C4"/>
</dbReference>
<dbReference type="HPA" id="ENSG00000125484">
    <property type="expression patterns" value="Low tissue specificity"/>
</dbReference>
<dbReference type="MIM" id="604892">
    <property type="type" value="gene"/>
</dbReference>
<dbReference type="neXtProt" id="NX_Q9UKN8"/>
<dbReference type="OpenTargets" id="ENSG00000125484"/>
<dbReference type="PharmGKB" id="PA29055"/>
<dbReference type="VEuPathDB" id="HostDB:ENSG00000125484"/>
<dbReference type="eggNOG" id="ENOG502QTDJ">
    <property type="taxonomic scope" value="Eukaryota"/>
</dbReference>
<dbReference type="GeneTree" id="ENSGT00390000011873"/>
<dbReference type="HOGENOM" id="CLU_018536_0_0_1"/>
<dbReference type="InParanoid" id="Q9UKN8"/>
<dbReference type="OMA" id="NGHVWLR"/>
<dbReference type="OrthoDB" id="6021743at2759"/>
<dbReference type="PAN-GO" id="Q9UKN8">
    <property type="GO annotations" value="1 GO annotation based on evolutionary models"/>
</dbReference>
<dbReference type="PhylomeDB" id="Q9UKN8"/>
<dbReference type="TreeFam" id="TF328412"/>
<dbReference type="BRENDA" id="2.3.1.48">
    <property type="organism ID" value="2681"/>
</dbReference>
<dbReference type="PathwayCommons" id="Q9UKN8"/>
<dbReference type="Reactome" id="R-HSA-749476">
    <property type="pathway name" value="RNA Polymerase III Abortive And Retractive Initiation"/>
</dbReference>
<dbReference type="Reactome" id="R-HSA-76061">
    <property type="pathway name" value="RNA Polymerase III Transcription Initiation From Type 1 Promoter"/>
</dbReference>
<dbReference type="Reactome" id="R-HSA-76066">
    <property type="pathway name" value="RNA Polymerase III Transcription Initiation From Type 2 Promoter"/>
</dbReference>
<dbReference type="SignaLink" id="Q9UKN8"/>
<dbReference type="SIGNOR" id="Q9UKN8"/>
<dbReference type="BioGRID-ORCS" id="9329">
    <property type="hits" value="550 hits in 1193 CRISPR screens"/>
</dbReference>
<dbReference type="ChiTaRS" id="GTF3C4">
    <property type="organism name" value="human"/>
</dbReference>
<dbReference type="GeneWiki" id="GTF3C4"/>
<dbReference type="GenomeRNAi" id="9329"/>
<dbReference type="Pharos" id="Q9UKN8">
    <property type="development level" value="Tdark"/>
</dbReference>
<dbReference type="PRO" id="PR:Q9UKN8"/>
<dbReference type="Proteomes" id="UP000005640">
    <property type="component" value="Chromosome 9"/>
</dbReference>
<dbReference type="RNAct" id="Q9UKN8">
    <property type="molecule type" value="protein"/>
</dbReference>
<dbReference type="Bgee" id="ENSG00000125484">
    <property type="expression patterns" value="Expressed in primordial germ cell in gonad and 179 other cell types or tissues"/>
</dbReference>
<dbReference type="ExpressionAtlas" id="Q9UKN8">
    <property type="expression patterns" value="baseline and differential"/>
</dbReference>
<dbReference type="GO" id="GO:0005739">
    <property type="term" value="C:mitochondrion"/>
    <property type="evidence" value="ECO:0000314"/>
    <property type="project" value="HPA"/>
</dbReference>
<dbReference type="GO" id="GO:0005654">
    <property type="term" value="C:nucleoplasm"/>
    <property type="evidence" value="ECO:0000314"/>
    <property type="project" value="HPA"/>
</dbReference>
<dbReference type="GO" id="GO:0000127">
    <property type="term" value="C:transcription factor TFIIIC complex"/>
    <property type="evidence" value="ECO:0000314"/>
    <property type="project" value="HGNC-UCL"/>
</dbReference>
<dbReference type="GO" id="GO:0003677">
    <property type="term" value="F:DNA binding"/>
    <property type="evidence" value="ECO:0007669"/>
    <property type="project" value="UniProtKB-KW"/>
</dbReference>
<dbReference type="GO" id="GO:0036408">
    <property type="term" value="F:histone H3K14 acetyltransferase activity"/>
    <property type="evidence" value="ECO:0000314"/>
    <property type="project" value="UniProtKB"/>
</dbReference>
<dbReference type="GO" id="GO:0000995">
    <property type="term" value="F:RNA polymerase III general transcription initiation factor activity"/>
    <property type="evidence" value="ECO:0000314"/>
    <property type="project" value="GO_Central"/>
</dbReference>
<dbReference type="GO" id="GO:0042791">
    <property type="term" value="P:5S class rRNA transcription by RNA polymerase III"/>
    <property type="evidence" value="ECO:0000305"/>
    <property type="project" value="HGNC-UCL"/>
</dbReference>
<dbReference type="GO" id="GO:0006383">
    <property type="term" value="P:transcription by RNA polymerase III"/>
    <property type="evidence" value="ECO:0000305"/>
    <property type="project" value="HGNC-UCL"/>
</dbReference>
<dbReference type="GO" id="GO:0006384">
    <property type="term" value="P:transcription initiation at RNA polymerase III promoter"/>
    <property type="evidence" value="ECO:0000304"/>
    <property type="project" value="ProtInc"/>
</dbReference>
<dbReference type="GO" id="GO:0042797">
    <property type="term" value="P:tRNA transcription by RNA polymerase III"/>
    <property type="evidence" value="ECO:0000305"/>
    <property type="project" value="HGNC-UCL"/>
</dbReference>
<dbReference type="InterPro" id="IPR045803">
    <property type="entry name" value="DUF5921"/>
</dbReference>
<dbReference type="InterPro" id="IPR044230">
    <property type="entry name" value="GTF3C4"/>
</dbReference>
<dbReference type="InterPro" id="IPR024761">
    <property type="entry name" value="TFIIIC_delta_N"/>
</dbReference>
<dbReference type="InterPro" id="IPR024764">
    <property type="entry name" value="TFIIIC_Znf"/>
</dbReference>
<dbReference type="InterPro" id="IPR036322">
    <property type="entry name" value="WD40_repeat_dom_sf"/>
</dbReference>
<dbReference type="PANTHER" id="PTHR15496:SF2">
    <property type="entry name" value="GENERAL TRANSCRIPTION FACTOR 3C POLYPEPTIDE 4"/>
    <property type="match status" value="1"/>
</dbReference>
<dbReference type="PANTHER" id="PTHR15496">
    <property type="entry name" value="GENERAL TRANSCRIPTION FACTOR 3C POLYPEPTIDE 4 FAMILY"/>
    <property type="match status" value="1"/>
</dbReference>
<dbReference type="Pfam" id="PF19336">
    <property type="entry name" value="DUF5921"/>
    <property type="match status" value="1"/>
</dbReference>
<dbReference type="Pfam" id="PF12657">
    <property type="entry name" value="TFIIIC_delta"/>
    <property type="match status" value="1"/>
</dbReference>
<dbReference type="Pfam" id="PF12660">
    <property type="entry name" value="zf-TFIIIC"/>
    <property type="match status" value="1"/>
</dbReference>
<dbReference type="SUPFAM" id="SSF50978">
    <property type="entry name" value="WD40 repeat-like"/>
    <property type="match status" value="1"/>
</dbReference>
<evidence type="ECO:0000256" key="1">
    <source>
        <dbReference type="SAM" id="MobiDB-lite"/>
    </source>
</evidence>
<evidence type="ECO:0000269" key="2">
    <source>
    </source>
</evidence>
<evidence type="ECO:0000269" key="3">
    <source>
    </source>
</evidence>
<evidence type="ECO:0000305" key="4"/>
<evidence type="ECO:0007744" key="5">
    <source>
    </source>
</evidence>
<evidence type="ECO:0007744" key="6">
    <source>
    </source>
</evidence>
<evidence type="ECO:0007744" key="7">
    <source>
    </source>
</evidence>
<evidence type="ECO:0007744" key="8">
    <source>
    </source>
</evidence>
<evidence type="ECO:0007744" key="9">
    <source>
    </source>
</evidence>
<evidence type="ECO:0007744" key="10">
    <source>
    </source>
</evidence>
<evidence type="ECO:0007744" key="11">
    <source>
    </source>
</evidence>
<evidence type="ECO:0007744" key="12">
    <source>
    </source>
</evidence>
<evidence type="ECO:0007829" key="13">
    <source>
        <dbReference type="PDB" id="8CLI"/>
    </source>
</evidence>
<evidence type="ECO:0007829" key="14">
    <source>
        <dbReference type="PDB" id="8CLJ"/>
    </source>
</evidence>
<protein>
    <recommendedName>
        <fullName>General transcription factor 3C polypeptide 4</fullName>
        <ecNumber evidence="2">2.3.1.48</ecNumber>
    </recommendedName>
    <alternativeName>
        <fullName>TF3C-delta</fullName>
    </alternativeName>
    <alternativeName>
        <fullName>Transcription factor IIIC 90 kDa subunit</fullName>
        <shortName>TFIIIC 90 kDa subunit</shortName>
        <shortName>TFIIIC90</shortName>
    </alternativeName>
    <alternativeName>
        <fullName>Transcription factor IIIC subunit delta</fullName>
    </alternativeName>
</protein>
<comment type="function">
    <text evidence="2">Essential for RNA polymerase III to make a number of small nuclear and cytoplasmic RNAs, including 5S RNA, tRNA, and adenovirus-associated (VA) RNA of both cellular and viral origin (PubMed:10523658). Has histone acetyltransferase activity (HAT) with unique specificity for free and nucleosomal H3 (PubMed:10523658). May cooperate with GTF3C5 in facilitating the recruitment of TFIIIB and RNA polymerase through direct interactions with BRF1, POLR3C and POLR3F (PubMed:10523658). May be localized close to the A box (PubMed:10523658).</text>
</comment>
<comment type="catalytic activity">
    <reaction evidence="2">
        <text>L-lysyl-[protein] + acetyl-CoA = N(6)-acetyl-L-lysyl-[protein] + CoA + H(+)</text>
        <dbReference type="Rhea" id="RHEA:45948"/>
        <dbReference type="Rhea" id="RHEA-COMP:9752"/>
        <dbReference type="Rhea" id="RHEA-COMP:10731"/>
        <dbReference type="ChEBI" id="CHEBI:15378"/>
        <dbReference type="ChEBI" id="CHEBI:29969"/>
        <dbReference type="ChEBI" id="CHEBI:57287"/>
        <dbReference type="ChEBI" id="CHEBI:57288"/>
        <dbReference type="ChEBI" id="CHEBI:61930"/>
        <dbReference type="EC" id="2.3.1.48"/>
    </reaction>
</comment>
<comment type="subunit">
    <text evidence="2 3">Part of the TFIIIC subcomplex TFIIIC2, consisting of six subunits, GTF3C1, GTF3C2, GTF3C3, GTF3C4, GTF3C5 and GTF3C6. Interacts with BRF1, GTF3C1, GTF3C2, GTF3C5, GTF3C6, POLR3C and POLR3F.</text>
</comment>
<comment type="interaction">
    <interactant intactId="EBI-1237240">
        <id>Q9UKN8</id>
    </interactant>
    <interactant intactId="EBI-1054873">
        <id>Q9Y5Q9</id>
        <label>GTF3C3</label>
    </interactant>
    <organismsDiffer>false</organismsDiffer>
    <experiments>2</experiments>
</comment>
<comment type="interaction">
    <interactant intactId="EBI-1237240">
        <id>Q9UKN8</id>
    </interactant>
    <interactant intactId="EBI-6268616">
        <id>Q969F1</id>
        <label>GTF3C6</label>
    </interactant>
    <organismsDiffer>false</organismsDiffer>
    <experiments>2</experiments>
</comment>
<comment type="subcellular location">
    <subcellularLocation>
        <location>Nucleus</location>
    </subcellularLocation>
</comment>
<comment type="similarity">
    <text evidence="4">Belongs to the TFIIIC subunit 4 family.</text>
</comment>
<comment type="sequence caution" evidence="4">
    <conflict type="miscellaneous discrepancy">
        <sequence resource="EMBL-CDS" id="AAH11619"/>
    </conflict>
    <text>Contaminating sequence. Potential poly-A sequence.</text>
</comment>